<keyword id="KW-0456">Lyase</keyword>
<keyword id="KW-0533">Nickel</keyword>
<proteinExistence type="inferred from homology"/>
<name>LARC_THEP1</name>
<evidence type="ECO:0000255" key="1">
    <source>
        <dbReference type="HAMAP-Rule" id="MF_01074"/>
    </source>
</evidence>
<reference key="1">
    <citation type="submission" date="2007-05" db="EMBL/GenBank/DDBJ databases">
        <title>Complete sequence of Thermotoga petrophila RKU-1.</title>
        <authorList>
            <consortium name="US DOE Joint Genome Institute"/>
            <person name="Copeland A."/>
            <person name="Lucas S."/>
            <person name="Lapidus A."/>
            <person name="Barry K."/>
            <person name="Glavina del Rio T."/>
            <person name="Dalin E."/>
            <person name="Tice H."/>
            <person name="Pitluck S."/>
            <person name="Sims D."/>
            <person name="Brettin T."/>
            <person name="Bruce D."/>
            <person name="Detter J.C."/>
            <person name="Han C."/>
            <person name="Tapia R."/>
            <person name="Schmutz J."/>
            <person name="Larimer F."/>
            <person name="Land M."/>
            <person name="Hauser L."/>
            <person name="Kyrpides N."/>
            <person name="Mikhailova N."/>
            <person name="Nelson K."/>
            <person name="Gogarten J.P."/>
            <person name="Noll K."/>
            <person name="Richardson P."/>
        </authorList>
    </citation>
    <scope>NUCLEOTIDE SEQUENCE [LARGE SCALE GENOMIC DNA]</scope>
    <source>
        <strain>ATCC BAA-488 / DSM 13995 / JCM 10881 / RKU-1</strain>
    </source>
</reference>
<dbReference type="EC" id="4.99.1.12" evidence="1"/>
<dbReference type="EMBL" id="CP000702">
    <property type="protein sequence ID" value="ABQ47783.1"/>
    <property type="molecule type" value="Genomic_DNA"/>
</dbReference>
<dbReference type="RefSeq" id="WP_011944187.1">
    <property type="nucleotide sequence ID" value="NC_009486.1"/>
</dbReference>
<dbReference type="SMR" id="A5INL0"/>
<dbReference type="STRING" id="390874.Tpet_1783"/>
<dbReference type="KEGG" id="tpt:Tpet_1783"/>
<dbReference type="eggNOG" id="COG1641">
    <property type="taxonomic scope" value="Bacteria"/>
</dbReference>
<dbReference type="HOGENOM" id="CLU_028523_2_1_0"/>
<dbReference type="Proteomes" id="UP000006558">
    <property type="component" value="Chromosome"/>
</dbReference>
<dbReference type="GO" id="GO:0016829">
    <property type="term" value="F:lyase activity"/>
    <property type="evidence" value="ECO:0007669"/>
    <property type="project" value="UniProtKB-UniRule"/>
</dbReference>
<dbReference type="GO" id="GO:0016151">
    <property type="term" value="F:nickel cation binding"/>
    <property type="evidence" value="ECO:0007669"/>
    <property type="project" value="UniProtKB-UniRule"/>
</dbReference>
<dbReference type="GO" id="GO:0051604">
    <property type="term" value="P:protein maturation"/>
    <property type="evidence" value="ECO:0007669"/>
    <property type="project" value="UniProtKB-UniRule"/>
</dbReference>
<dbReference type="Gene3D" id="3.10.20.300">
    <property type="entry name" value="mk0293 like domain"/>
    <property type="match status" value="1"/>
</dbReference>
<dbReference type="Gene3D" id="3.30.70.1380">
    <property type="entry name" value="Transcriptional regulatory protein pf0864 domain like"/>
    <property type="match status" value="1"/>
</dbReference>
<dbReference type="HAMAP" id="MF_01074">
    <property type="entry name" value="LarC"/>
    <property type="match status" value="1"/>
</dbReference>
<dbReference type="InterPro" id="IPR002822">
    <property type="entry name" value="Ni_insertion"/>
</dbReference>
<dbReference type="NCBIfam" id="TIGR00299">
    <property type="entry name" value="nickel pincer cofactor biosynthesis protein LarC"/>
    <property type="match status" value="1"/>
</dbReference>
<dbReference type="PANTHER" id="PTHR36566">
    <property type="entry name" value="NICKEL INSERTION PROTEIN-RELATED"/>
    <property type="match status" value="1"/>
</dbReference>
<dbReference type="PANTHER" id="PTHR36566:SF1">
    <property type="entry name" value="PYRIDINIUM-3,5-BISTHIOCARBOXYLIC ACID MONONUCLEOTIDE NICKEL INSERTION PROTEIN"/>
    <property type="match status" value="1"/>
</dbReference>
<dbReference type="Pfam" id="PF01969">
    <property type="entry name" value="Ni_insertion"/>
    <property type="match status" value="1"/>
</dbReference>
<protein>
    <recommendedName>
        <fullName evidence="1">Pyridinium-3,5-bisthiocarboxylic acid mononucleotide nickel insertion protein</fullName>
        <shortName evidence="1">P2TMN nickel insertion protein</shortName>
        <ecNumber evidence="1">4.99.1.12</ecNumber>
    </recommendedName>
    <alternativeName>
        <fullName evidence="1">Nickel-pincer cofactor biosynthesis protein LarC</fullName>
    </alternativeName>
</protein>
<gene>
    <name evidence="1" type="primary">larC</name>
    <name type="ordered locus">Tpet_1783</name>
</gene>
<accession>A5INL0</accession>
<sequence length="397" mass="44444">MEKILYLDPFSGIAGDMFLGLLVDLGVDPEELKKRLSKLGVEFELRIRKVNKKGITATKVDVVFPGKEHHEDHIDHEHHGRHLSEIMKILERLEDPAREKATEMFETLAEAESKVHGLPKEKVHFHEVGAMDAVIEIAGAVVGLELLGVERVFCGAVNTGSGFVMTEHGRYPVPAPATAELLKGIPIYMDQKVRAELVTPTGAVILKELVDEFGTPILRIEKVGYGAGTVDLEIPNVLRGYLGFLEGKSERDILIETNVDDMNPQLFGYLMEKLFETGAKDVFYTPIYMKKNRPAVKVSVLCSEEKRDQILKVLFKESTSIGARVFHLEKVEAPRKVISVETEYGKIPVKVAYFDSEVVNVSPEYEACKKIAQEKEVPLKEIYNAVYRKISEVQGNV</sequence>
<comment type="function">
    <text evidence="1">Involved in the biosynthesis of a nickel-pincer cofactor ((SCS)Ni(II) pincer complex). Binds Ni(2+), and functions in nickel delivery to pyridinium-3,5-bisthiocarboxylic acid mononucleotide (P2TMN), to form the mature cofactor. Is thus probably required for the activation of nickel-pincer cofactor-dependent enzymes.</text>
</comment>
<comment type="catalytic activity">
    <reaction evidence="1">
        <text>Ni(II)-pyridinium-3,5-bisthiocarboxylate mononucleotide = pyridinium-3,5-bisthiocarboxylate mononucleotide + Ni(2+)</text>
        <dbReference type="Rhea" id="RHEA:54784"/>
        <dbReference type="ChEBI" id="CHEBI:49786"/>
        <dbReference type="ChEBI" id="CHEBI:137372"/>
        <dbReference type="ChEBI" id="CHEBI:137373"/>
        <dbReference type="EC" id="4.99.1.12"/>
    </reaction>
</comment>
<comment type="similarity">
    <text evidence="1">Belongs to the LarC family.</text>
</comment>
<organism>
    <name type="scientific">Thermotoga petrophila (strain ATCC BAA-488 / DSM 13995 / JCM 10881 / RKU-1)</name>
    <dbReference type="NCBI Taxonomy" id="390874"/>
    <lineage>
        <taxon>Bacteria</taxon>
        <taxon>Thermotogati</taxon>
        <taxon>Thermotogota</taxon>
        <taxon>Thermotogae</taxon>
        <taxon>Thermotogales</taxon>
        <taxon>Thermotogaceae</taxon>
        <taxon>Thermotoga</taxon>
    </lineage>
</organism>
<feature type="chain" id="PRO_1000136696" description="Pyridinium-3,5-bisthiocarboxylic acid mononucleotide nickel insertion protein">
    <location>
        <begin position="1"/>
        <end position="397"/>
    </location>
</feature>